<protein>
    <recommendedName>
        <fullName evidence="1">Small ribosomal subunit protein uS15</fullName>
    </recommendedName>
    <alternativeName>
        <fullName evidence="2">30S ribosomal protein S15</fullName>
    </alternativeName>
</protein>
<dbReference type="EMBL" id="BX908798">
    <property type="protein sequence ID" value="CAF23368.1"/>
    <property type="molecule type" value="Genomic_DNA"/>
</dbReference>
<dbReference type="RefSeq" id="WP_011175194.1">
    <property type="nucleotide sequence ID" value="NC_005861.2"/>
</dbReference>
<dbReference type="SMR" id="Q6MDI1"/>
<dbReference type="STRING" id="264201.pc0644"/>
<dbReference type="KEGG" id="pcu:PC_RS03085"/>
<dbReference type="eggNOG" id="COG0184">
    <property type="taxonomic scope" value="Bacteria"/>
</dbReference>
<dbReference type="HOGENOM" id="CLU_148518_0_0_0"/>
<dbReference type="OrthoDB" id="9799262at2"/>
<dbReference type="Proteomes" id="UP000000529">
    <property type="component" value="Chromosome"/>
</dbReference>
<dbReference type="GO" id="GO:0022627">
    <property type="term" value="C:cytosolic small ribosomal subunit"/>
    <property type="evidence" value="ECO:0007669"/>
    <property type="project" value="TreeGrafter"/>
</dbReference>
<dbReference type="GO" id="GO:0019843">
    <property type="term" value="F:rRNA binding"/>
    <property type="evidence" value="ECO:0007669"/>
    <property type="project" value="UniProtKB-UniRule"/>
</dbReference>
<dbReference type="GO" id="GO:0003735">
    <property type="term" value="F:structural constituent of ribosome"/>
    <property type="evidence" value="ECO:0007669"/>
    <property type="project" value="InterPro"/>
</dbReference>
<dbReference type="GO" id="GO:0006412">
    <property type="term" value="P:translation"/>
    <property type="evidence" value="ECO:0007669"/>
    <property type="project" value="UniProtKB-UniRule"/>
</dbReference>
<dbReference type="CDD" id="cd00353">
    <property type="entry name" value="Ribosomal_S15p_S13e"/>
    <property type="match status" value="1"/>
</dbReference>
<dbReference type="FunFam" id="1.10.287.10:FF:000002">
    <property type="entry name" value="30S ribosomal protein S15"/>
    <property type="match status" value="1"/>
</dbReference>
<dbReference type="Gene3D" id="6.10.250.3130">
    <property type="match status" value="1"/>
</dbReference>
<dbReference type="Gene3D" id="1.10.287.10">
    <property type="entry name" value="S15/NS1, RNA-binding"/>
    <property type="match status" value="1"/>
</dbReference>
<dbReference type="HAMAP" id="MF_01343_B">
    <property type="entry name" value="Ribosomal_uS15_B"/>
    <property type="match status" value="1"/>
</dbReference>
<dbReference type="InterPro" id="IPR000589">
    <property type="entry name" value="Ribosomal_uS15"/>
</dbReference>
<dbReference type="InterPro" id="IPR005290">
    <property type="entry name" value="Ribosomal_uS15_bac-type"/>
</dbReference>
<dbReference type="InterPro" id="IPR009068">
    <property type="entry name" value="uS15_NS1_RNA-bd_sf"/>
</dbReference>
<dbReference type="NCBIfam" id="TIGR00952">
    <property type="entry name" value="S15_bact"/>
    <property type="match status" value="1"/>
</dbReference>
<dbReference type="PANTHER" id="PTHR23321">
    <property type="entry name" value="RIBOSOMAL PROTEIN S15, BACTERIAL AND ORGANELLAR"/>
    <property type="match status" value="1"/>
</dbReference>
<dbReference type="PANTHER" id="PTHR23321:SF26">
    <property type="entry name" value="SMALL RIBOSOMAL SUBUNIT PROTEIN US15M"/>
    <property type="match status" value="1"/>
</dbReference>
<dbReference type="Pfam" id="PF00312">
    <property type="entry name" value="Ribosomal_S15"/>
    <property type="match status" value="1"/>
</dbReference>
<dbReference type="SMART" id="SM01387">
    <property type="entry name" value="Ribosomal_S15"/>
    <property type="match status" value="1"/>
</dbReference>
<dbReference type="SUPFAM" id="SSF47060">
    <property type="entry name" value="S15/NS1 RNA-binding domain"/>
    <property type="match status" value="1"/>
</dbReference>
<dbReference type="PROSITE" id="PS00362">
    <property type="entry name" value="RIBOSOMAL_S15"/>
    <property type="match status" value="1"/>
</dbReference>
<feature type="chain" id="PRO_0000115496" description="Small ribosomal subunit protein uS15">
    <location>
        <begin position="1"/>
        <end position="89"/>
    </location>
</feature>
<proteinExistence type="inferred from homology"/>
<comment type="function">
    <text evidence="1">One of the primary rRNA binding proteins, it binds directly to 16S rRNA where it helps nucleate assembly of the platform of the 30S subunit by binding and bridging several RNA helices of the 16S rRNA.</text>
</comment>
<comment type="function">
    <text evidence="1">Forms an intersubunit bridge (bridge B4) with the 23S rRNA of the 50S subunit in the ribosome.</text>
</comment>
<comment type="subunit">
    <text evidence="1">Part of the 30S ribosomal subunit. Forms a bridge to the 50S subunit in the 70S ribosome, contacting the 23S rRNA.</text>
</comment>
<comment type="similarity">
    <text evidence="1">Belongs to the universal ribosomal protein uS15 family.</text>
</comment>
<evidence type="ECO:0000255" key="1">
    <source>
        <dbReference type="HAMAP-Rule" id="MF_01343"/>
    </source>
</evidence>
<evidence type="ECO:0000305" key="2"/>
<keyword id="KW-1185">Reference proteome</keyword>
<keyword id="KW-0687">Ribonucleoprotein</keyword>
<keyword id="KW-0689">Ribosomal protein</keyword>
<keyword id="KW-0694">RNA-binding</keyword>
<keyword id="KW-0699">rRNA-binding</keyword>
<sequence>MSLDKGTKEEITKKFQLHEKDTGSADVQIAILTERITELTEHLKRAPKDHGSRLALLKLVGQRRRLLDYLNSTDTKRYQTLINKLKLRR</sequence>
<name>RS15_PARUW</name>
<accession>Q6MDI1</accession>
<organism>
    <name type="scientific">Protochlamydia amoebophila (strain UWE25)</name>
    <dbReference type="NCBI Taxonomy" id="264201"/>
    <lineage>
        <taxon>Bacteria</taxon>
        <taxon>Pseudomonadati</taxon>
        <taxon>Chlamydiota</taxon>
        <taxon>Chlamydiia</taxon>
        <taxon>Parachlamydiales</taxon>
        <taxon>Parachlamydiaceae</taxon>
        <taxon>Candidatus Protochlamydia</taxon>
    </lineage>
</organism>
<reference key="1">
    <citation type="journal article" date="2004" name="Science">
        <title>Illuminating the evolutionary history of chlamydiae.</title>
        <authorList>
            <person name="Horn M."/>
            <person name="Collingro A."/>
            <person name="Schmitz-Esser S."/>
            <person name="Beier C.L."/>
            <person name="Purkhold U."/>
            <person name="Fartmann B."/>
            <person name="Brandt P."/>
            <person name="Nyakatura G.J."/>
            <person name="Droege M."/>
            <person name="Frishman D."/>
            <person name="Rattei T."/>
            <person name="Mewes H.-W."/>
            <person name="Wagner M."/>
        </authorList>
    </citation>
    <scope>NUCLEOTIDE SEQUENCE [LARGE SCALE GENOMIC DNA]</scope>
    <source>
        <strain>UWE25</strain>
    </source>
</reference>
<gene>
    <name evidence="1" type="primary">rpsO</name>
    <name type="ordered locus">pc0644</name>
</gene>